<dbReference type="EMBL" id="CP000562">
    <property type="protein sequence ID" value="ABN56781.1"/>
    <property type="molecule type" value="Genomic_DNA"/>
</dbReference>
<dbReference type="RefSeq" id="WP_011843692.1">
    <property type="nucleotide sequence ID" value="NC_009051.1"/>
</dbReference>
<dbReference type="SMR" id="A3CTT1"/>
<dbReference type="STRING" id="368407.Memar_0848"/>
<dbReference type="GeneID" id="4846192"/>
<dbReference type="KEGG" id="mem:Memar_0848"/>
<dbReference type="eggNOG" id="arCOG04113">
    <property type="taxonomic scope" value="Archaea"/>
</dbReference>
<dbReference type="HOGENOM" id="CLU_084051_0_2_2"/>
<dbReference type="OrthoDB" id="30538at2157"/>
<dbReference type="Proteomes" id="UP000002146">
    <property type="component" value="Chromosome"/>
</dbReference>
<dbReference type="GO" id="GO:1990904">
    <property type="term" value="C:ribonucleoprotein complex"/>
    <property type="evidence" value="ECO:0007669"/>
    <property type="project" value="UniProtKB-KW"/>
</dbReference>
<dbReference type="GO" id="GO:0005840">
    <property type="term" value="C:ribosome"/>
    <property type="evidence" value="ECO:0007669"/>
    <property type="project" value="UniProtKB-KW"/>
</dbReference>
<dbReference type="GO" id="GO:0003735">
    <property type="term" value="F:structural constituent of ribosome"/>
    <property type="evidence" value="ECO:0007669"/>
    <property type="project" value="InterPro"/>
</dbReference>
<dbReference type="GO" id="GO:0006412">
    <property type="term" value="P:translation"/>
    <property type="evidence" value="ECO:0007669"/>
    <property type="project" value="UniProtKB-UniRule"/>
</dbReference>
<dbReference type="CDD" id="cd01433">
    <property type="entry name" value="Ribosomal_L16_L10e"/>
    <property type="match status" value="1"/>
</dbReference>
<dbReference type="Gene3D" id="3.90.1170.10">
    <property type="entry name" value="Ribosomal protein L10e/L16"/>
    <property type="match status" value="1"/>
</dbReference>
<dbReference type="HAMAP" id="MF_00448">
    <property type="entry name" value="Ribosomal_uL16_arch"/>
    <property type="match status" value="1"/>
</dbReference>
<dbReference type="InterPro" id="IPR047873">
    <property type="entry name" value="Ribosomal_uL16"/>
</dbReference>
<dbReference type="InterPro" id="IPR022981">
    <property type="entry name" value="Ribosomal_uL16_arc"/>
</dbReference>
<dbReference type="InterPro" id="IPR018255">
    <property type="entry name" value="Ribosomal_uL16_CS_euk_arc"/>
</dbReference>
<dbReference type="InterPro" id="IPR016180">
    <property type="entry name" value="Ribosomal_uL16_dom"/>
</dbReference>
<dbReference type="InterPro" id="IPR001197">
    <property type="entry name" value="Ribosomal_uL16_euk_arch"/>
</dbReference>
<dbReference type="InterPro" id="IPR036920">
    <property type="entry name" value="Ribosomal_uL16_sf"/>
</dbReference>
<dbReference type="NCBIfam" id="NF003238">
    <property type="entry name" value="PRK04199.1-3"/>
    <property type="match status" value="1"/>
</dbReference>
<dbReference type="NCBIfam" id="NF003239">
    <property type="entry name" value="PRK04199.1-4"/>
    <property type="match status" value="1"/>
</dbReference>
<dbReference type="NCBIfam" id="TIGR00279">
    <property type="entry name" value="uL16_euk_arch"/>
    <property type="match status" value="1"/>
</dbReference>
<dbReference type="PANTHER" id="PTHR11726">
    <property type="entry name" value="60S RIBOSOMAL PROTEIN L10"/>
    <property type="match status" value="1"/>
</dbReference>
<dbReference type="Pfam" id="PF00252">
    <property type="entry name" value="Ribosomal_L16"/>
    <property type="match status" value="1"/>
</dbReference>
<dbReference type="PIRSF" id="PIRSF005590">
    <property type="entry name" value="Ribosomal_L10"/>
    <property type="match status" value="1"/>
</dbReference>
<dbReference type="SUPFAM" id="SSF54686">
    <property type="entry name" value="Ribosomal protein L16p/L10e"/>
    <property type="match status" value="1"/>
</dbReference>
<dbReference type="PROSITE" id="PS01257">
    <property type="entry name" value="RIBOSOMAL_L10E"/>
    <property type="match status" value="1"/>
</dbReference>
<accession>A3CTT1</accession>
<protein>
    <recommendedName>
        <fullName evidence="1">Large ribosomal subunit protein uL16</fullName>
    </recommendedName>
    <alternativeName>
        <fullName evidence="2">50S ribosomal protein L10e</fullName>
    </alternativeName>
</protein>
<gene>
    <name evidence="1" type="primary">rpl10e</name>
    <name type="ordered locus">Memar_0848</name>
</gene>
<proteinExistence type="inferred from homology"/>
<feature type="chain" id="PRO_1000026191" description="Large ribosomal subunit protein uL16">
    <location>
        <begin position="1"/>
        <end position="170"/>
    </location>
</feature>
<comment type="similarity">
    <text evidence="1">Belongs to the universal ribosomal protein uL16 family.</text>
</comment>
<sequence length="170" mass="19036">MVRKPAKMYRNLAKKAYTRREYMGGVPGSKIVQFDMGNLTEDYPVELSIVVDETCQIRHTALEAARIGINRQLQKEVGRANFHLKIRTFPHHVLRENKQATGAGADRVSEGMRLAFGKAVGTAARVEKGQKVFSVWTSPQYVDKAKVSLKRGIYKLPTPARIVEERAPAA</sequence>
<evidence type="ECO:0000255" key="1">
    <source>
        <dbReference type="HAMAP-Rule" id="MF_00448"/>
    </source>
</evidence>
<evidence type="ECO:0000305" key="2"/>
<keyword id="KW-0687">Ribonucleoprotein</keyword>
<keyword id="KW-0689">Ribosomal protein</keyword>
<name>RL10E_METMJ</name>
<organism>
    <name type="scientific">Methanoculleus marisnigri (strain ATCC 35101 / DSM 1498 / JR1)</name>
    <dbReference type="NCBI Taxonomy" id="368407"/>
    <lineage>
        <taxon>Archaea</taxon>
        <taxon>Methanobacteriati</taxon>
        <taxon>Methanobacteriota</taxon>
        <taxon>Stenosarchaea group</taxon>
        <taxon>Methanomicrobia</taxon>
        <taxon>Methanomicrobiales</taxon>
        <taxon>Methanomicrobiaceae</taxon>
        <taxon>Methanoculleus</taxon>
    </lineage>
</organism>
<reference key="1">
    <citation type="journal article" date="2009" name="Stand. Genomic Sci.">
        <title>Complete genome sequence of Methanoculleus marisnigri Romesser et al. 1981 type strain JR1.</title>
        <authorList>
            <person name="Anderson I.J."/>
            <person name="Sieprawska-Lupa M."/>
            <person name="Lapidus A."/>
            <person name="Nolan M."/>
            <person name="Copeland A."/>
            <person name="Glavina Del Rio T."/>
            <person name="Tice H."/>
            <person name="Dalin E."/>
            <person name="Barry K."/>
            <person name="Saunders E."/>
            <person name="Han C."/>
            <person name="Brettin T."/>
            <person name="Detter J.C."/>
            <person name="Bruce D."/>
            <person name="Mikhailova N."/>
            <person name="Pitluck S."/>
            <person name="Hauser L."/>
            <person name="Land M."/>
            <person name="Lucas S."/>
            <person name="Richardson P."/>
            <person name="Whitman W.B."/>
            <person name="Kyrpides N.C."/>
        </authorList>
    </citation>
    <scope>NUCLEOTIDE SEQUENCE [LARGE SCALE GENOMIC DNA]</scope>
    <source>
        <strain>ATCC 35101 / DSM 1498 / JR1</strain>
    </source>
</reference>